<gene>
    <name evidence="1" type="primary">psbL</name>
    <name type="ordered locus">Pro_0330</name>
</gene>
<comment type="function">
    <text evidence="1">One of the components of the core complex of photosystem II (PSII). PSII is a light-driven water:plastoquinone oxidoreductase that uses light energy to abstract electrons from H(2)O, generating O(2) and a proton gradient subsequently used for ATP formation. It consists of a core antenna complex that captures photons, and an electron transfer chain that converts photonic excitation into a charge separation. This subunit is found at the monomer-monomer interface and is required for correct PSII assembly and/or dimerization.</text>
</comment>
<comment type="subunit">
    <text evidence="2">PSII is composed of 1 copy each of membrane proteins PsbA, PsbB, PsbC, PsbD, PsbE, PsbF, PsbH, PsbI, PsbJ, PsbK, PsbL, PsbM, PsbT, PsbX, PsbY, Psb30/Ycf12, peripheral proteins PsbO, CyanoQ (PsbQ), PsbU, PsbV and a large number of cofactors. It forms dimeric complexes.</text>
</comment>
<comment type="subcellular location">
    <subcellularLocation>
        <location evidence="1">Cellular thylakoid membrane</location>
        <topology evidence="1">Single-pass membrane protein</topology>
    </subcellularLocation>
</comment>
<comment type="similarity">
    <text evidence="1">Belongs to the PsbL family.</text>
</comment>
<keyword id="KW-0472">Membrane</keyword>
<keyword id="KW-0602">Photosynthesis</keyword>
<keyword id="KW-0604">Photosystem II</keyword>
<keyword id="KW-0674">Reaction center</keyword>
<keyword id="KW-1185">Reference proteome</keyword>
<keyword id="KW-0793">Thylakoid</keyword>
<keyword id="KW-0812">Transmembrane</keyword>
<keyword id="KW-1133">Transmembrane helix</keyword>
<sequence>MQVNPNPNKLSVELNRTSLYLGLLLVFVLGILFSSYFFN</sequence>
<accession>Q7VDN8</accession>
<organism>
    <name type="scientific">Prochlorococcus marinus (strain SARG / CCMP1375 / SS120)</name>
    <dbReference type="NCBI Taxonomy" id="167539"/>
    <lineage>
        <taxon>Bacteria</taxon>
        <taxon>Bacillati</taxon>
        <taxon>Cyanobacteriota</taxon>
        <taxon>Cyanophyceae</taxon>
        <taxon>Synechococcales</taxon>
        <taxon>Prochlorococcaceae</taxon>
        <taxon>Prochlorococcus</taxon>
    </lineage>
</organism>
<dbReference type="EMBL" id="AE017126">
    <property type="protein sequence ID" value="AAP99376.1"/>
    <property type="molecule type" value="Genomic_DNA"/>
</dbReference>
<dbReference type="RefSeq" id="NP_874724.1">
    <property type="nucleotide sequence ID" value="NC_005042.1"/>
</dbReference>
<dbReference type="RefSeq" id="WP_011124485.1">
    <property type="nucleotide sequence ID" value="NC_005042.1"/>
</dbReference>
<dbReference type="SMR" id="Q7VDN8"/>
<dbReference type="STRING" id="167539.Pro_0330"/>
<dbReference type="EnsemblBacteria" id="AAP99376">
    <property type="protein sequence ID" value="AAP99376"/>
    <property type="gene ID" value="Pro_0330"/>
</dbReference>
<dbReference type="KEGG" id="pma:Pro_0330"/>
<dbReference type="PATRIC" id="fig|167539.5.peg.339"/>
<dbReference type="eggNOG" id="ENOG5033AKP">
    <property type="taxonomic scope" value="Bacteria"/>
</dbReference>
<dbReference type="HOGENOM" id="CLU_214425_0_0_3"/>
<dbReference type="Proteomes" id="UP000001420">
    <property type="component" value="Chromosome"/>
</dbReference>
<dbReference type="GO" id="GO:0009539">
    <property type="term" value="C:photosystem II reaction center"/>
    <property type="evidence" value="ECO:0007669"/>
    <property type="project" value="InterPro"/>
</dbReference>
<dbReference type="GO" id="GO:0031676">
    <property type="term" value="C:plasma membrane-derived thylakoid membrane"/>
    <property type="evidence" value="ECO:0007669"/>
    <property type="project" value="UniProtKB-SubCell"/>
</dbReference>
<dbReference type="GO" id="GO:0015979">
    <property type="term" value="P:photosynthesis"/>
    <property type="evidence" value="ECO:0007669"/>
    <property type="project" value="UniProtKB-UniRule"/>
</dbReference>
<dbReference type="HAMAP" id="MF_01317">
    <property type="entry name" value="PSII_PsbL"/>
    <property type="match status" value="1"/>
</dbReference>
<dbReference type="InterPro" id="IPR003372">
    <property type="entry name" value="PSII_PsbL"/>
</dbReference>
<dbReference type="InterPro" id="IPR037266">
    <property type="entry name" value="PSII_PsbL_sf"/>
</dbReference>
<dbReference type="NCBIfam" id="NF001972">
    <property type="entry name" value="PRK00753.1"/>
    <property type="match status" value="1"/>
</dbReference>
<dbReference type="Pfam" id="PF02419">
    <property type="entry name" value="PsbL"/>
    <property type="match status" value="1"/>
</dbReference>
<dbReference type="SUPFAM" id="SSF161017">
    <property type="entry name" value="Photosystem II reaction center protein L, PsbL"/>
    <property type="match status" value="1"/>
</dbReference>
<feature type="chain" id="PRO_0000219787" description="Photosystem II reaction center protein L">
    <location>
        <begin position="1"/>
        <end position="39"/>
    </location>
</feature>
<feature type="transmembrane region" description="Helical" evidence="1">
    <location>
        <begin position="18"/>
        <end position="38"/>
    </location>
</feature>
<protein>
    <recommendedName>
        <fullName evidence="1">Photosystem II reaction center protein L</fullName>
        <shortName evidence="1">PSII-L</shortName>
    </recommendedName>
</protein>
<evidence type="ECO:0000255" key="1">
    <source>
        <dbReference type="HAMAP-Rule" id="MF_01317"/>
    </source>
</evidence>
<evidence type="ECO:0000305" key="2"/>
<name>PSBL_PROMA</name>
<reference key="1">
    <citation type="journal article" date="2003" name="Proc. Natl. Acad. Sci. U.S.A.">
        <title>Genome sequence of the cyanobacterium Prochlorococcus marinus SS120, a nearly minimal oxyphototrophic genome.</title>
        <authorList>
            <person name="Dufresne A."/>
            <person name="Salanoubat M."/>
            <person name="Partensky F."/>
            <person name="Artiguenave F."/>
            <person name="Axmann I.M."/>
            <person name="Barbe V."/>
            <person name="Duprat S."/>
            <person name="Galperin M.Y."/>
            <person name="Koonin E.V."/>
            <person name="Le Gall F."/>
            <person name="Makarova K.S."/>
            <person name="Ostrowski M."/>
            <person name="Oztas S."/>
            <person name="Robert C."/>
            <person name="Rogozin I.B."/>
            <person name="Scanlan D.J."/>
            <person name="Tandeau de Marsac N."/>
            <person name="Weissenbach J."/>
            <person name="Wincker P."/>
            <person name="Wolf Y.I."/>
            <person name="Hess W.R."/>
        </authorList>
    </citation>
    <scope>NUCLEOTIDE SEQUENCE [LARGE SCALE GENOMIC DNA]</scope>
    <source>
        <strain>SARG / CCMP1375 / SS120</strain>
    </source>
</reference>
<proteinExistence type="inferred from homology"/>